<sequence>MIINTAAYQFVTIQDPQTLADGVRAQAEQHALKGSVLVAEEGINLFLAGAAEQIGAFYAWLQADARFAQMRIKYSESAHQPFARLKVKIKPEIISFRRDDASPLQGRAPSVTPAVLREWLRNGQDDRGRPLVLLDTRNAQEVAYGTFQGALTLPIDKFTDLPGALEPHRGALADATVVSFCTGGIRCEKAALWMQADGMDNVLQLEGGILGYFEEVGGEGYEGRCFVFDERVALDPELKPLVDADRTA</sequence>
<keyword id="KW-0560">Oxidoreductase</keyword>
<keyword id="KW-0819">tRNA processing</keyword>
<feature type="chain" id="PRO_0000242956" description="tRNA uridine(34) hydroxylase">
    <location>
        <begin position="1"/>
        <end position="248"/>
    </location>
</feature>
<feature type="domain" description="Rhodanese" evidence="1">
    <location>
        <begin position="127"/>
        <end position="221"/>
    </location>
</feature>
<feature type="active site" description="Cysteine persulfide intermediate" evidence="1">
    <location>
        <position position="181"/>
    </location>
</feature>
<reference key="1">
    <citation type="journal article" date="2005" name="J. Bacteriol.">
        <title>Insights into genome plasticity and pathogenicity of the plant pathogenic Bacterium Xanthomonas campestris pv. vesicatoria revealed by the complete genome sequence.</title>
        <authorList>
            <person name="Thieme F."/>
            <person name="Koebnik R."/>
            <person name="Bekel T."/>
            <person name="Berger C."/>
            <person name="Boch J."/>
            <person name="Buettner D."/>
            <person name="Caldana C."/>
            <person name="Gaigalat L."/>
            <person name="Goesmann A."/>
            <person name="Kay S."/>
            <person name="Kirchner O."/>
            <person name="Lanz C."/>
            <person name="Linke B."/>
            <person name="McHardy A.C."/>
            <person name="Meyer F."/>
            <person name="Mittenhuber G."/>
            <person name="Nies D.H."/>
            <person name="Niesbach-Kloesgen U."/>
            <person name="Patschkowski T."/>
            <person name="Rueckert C."/>
            <person name="Rupp O."/>
            <person name="Schneiker S."/>
            <person name="Schuster S.C."/>
            <person name="Vorhoelter F.J."/>
            <person name="Weber E."/>
            <person name="Puehler A."/>
            <person name="Bonas U."/>
            <person name="Bartels D."/>
            <person name="Kaiser O."/>
        </authorList>
    </citation>
    <scope>NUCLEOTIDE SEQUENCE [LARGE SCALE GENOMIC DNA]</scope>
    <source>
        <strain>85-10</strain>
    </source>
</reference>
<organism>
    <name type="scientific">Xanthomonas euvesicatoria pv. vesicatoria (strain 85-10)</name>
    <name type="common">Xanthomonas campestris pv. vesicatoria</name>
    <dbReference type="NCBI Taxonomy" id="316273"/>
    <lineage>
        <taxon>Bacteria</taxon>
        <taxon>Pseudomonadati</taxon>
        <taxon>Pseudomonadota</taxon>
        <taxon>Gammaproteobacteria</taxon>
        <taxon>Lysobacterales</taxon>
        <taxon>Lysobacteraceae</taxon>
        <taxon>Xanthomonas</taxon>
    </lineage>
</organism>
<accession>Q3BSW1</accession>
<comment type="function">
    <text evidence="1">Catalyzes oxygen-dependent 5-hydroxyuridine (ho5U) modification at position 34 in tRNAs.</text>
</comment>
<comment type="catalytic activity">
    <reaction evidence="1">
        <text>uridine(34) in tRNA + AH2 + O2 = 5-hydroxyuridine(34) in tRNA + A + H2O</text>
        <dbReference type="Rhea" id="RHEA:64224"/>
        <dbReference type="Rhea" id="RHEA-COMP:11727"/>
        <dbReference type="Rhea" id="RHEA-COMP:13381"/>
        <dbReference type="ChEBI" id="CHEBI:13193"/>
        <dbReference type="ChEBI" id="CHEBI:15377"/>
        <dbReference type="ChEBI" id="CHEBI:15379"/>
        <dbReference type="ChEBI" id="CHEBI:17499"/>
        <dbReference type="ChEBI" id="CHEBI:65315"/>
        <dbReference type="ChEBI" id="CHEBI:136877"/>
    </reaction>
</comment>
<comment type="similarity">
    <text evidence="1">Belongs to the TrhO family.</text>
</comment>
<evidence type="ECO:0000255" key="1">
    <source>
        <dbReference type="HAMAP-Rule" id="MF_00469"/>
    </source>
</evidence>
<proteinExistence type="inferred from homology"/>
<dbReference type="EC" id="1.14.-.-" evidence="1"/>
<dbReference type="EMBL" id="AM039952">
    <property type="protein sequence ID" value="CAJ24098.1"/>
    <property type="molecule type" value="Genomic_DNA"/>
</dbReference>
<dbReference type="RefSeq" id="WP_011347605.1">
    <property type="nucleotide sequence ID" value="NZ_CP017190.1"/>
</dbReference>
<dbReference type="SMR" id="Q3BSW1"/>
<dbReference type="STRING" id="456327.BJD11_10845"/>
<dbReference type="KEGG" id="xcv:XCV2421"/>
<dbReference type="eggNOG" id="COG1054">
    <property type="taxonomic scope" value="Bacteria"/>
</dbReference>
<dbReference type="HOGENOM" id="CLU_038878_0_1_6"/>
<dbReference type="Proteomes" id="UP000007069">
    <property type="component" value="Chromosome"/>
</dbReference>
<dbReference type="GO" id="GO:0016705">
    <property type="term" value="F:oxidoreductase activity, acting on paired donors, with incorporation or reduction of molecular oxygen"/>
    <property type="evidence" value="ECO:0007669"/>
    <property type="project" value="UniProtKB-UniRule"/>
</dbReference>
<dbReference type="GO" id="GO:0006400">
    <property type="term" value="P:tRNA modification"/>
    <property type="evidence" value="ECO:0007669"/>
    <property type="project" value="UniProtKB-UniRule"/>
</dbReference>
<dbReference type="Gene3D" id="3.30.70.100">
    <property type="match status" value="1"/>
</dbReference>
<dbReference type="Gene3D" id="3.40.250.10">
    <property type="entry name" value="Rhodanese-like domain"/>
    <property type="match status" value="1"/>
</dbReference>
<dbReference type="HAMAP" id="MF_00469">
    <property type="entry name" value="TrhO"/>
    <property type="match status" value="1"/>
</dbReference>
<dbReference type="InterPro" id="IPR001763">
    <property type="entry name" value="Rhodanese-like_dom"/>
</dbReference>
<dbReference type="InterPro" id="IPR036873">
    <property type="entry name" value="Rhodanese-like_dom_sf"/>
</dbReference>
<dbReference type="InterPro" id="IPR020936">
    <property type="entry name" value="TrhO"/>
</dbReference>
<dbReference type="InterPro" id="IPR040503">
    <property type="entry name" value="TRHO_N"/>
</dbReference>
<dbReference type="NCBIfam" id="NF003703">
    <property type="entry name" value="PRK05320.1"/>
    <property type="match status" value="1"/>
</dbReference>
<dbReference type="PANTHER" id="PTHR43268:SF3">
    <property type="entry name" value="RHODANESE-LIKE DOMAIN-CONTAINING PROTEIN 7-RELATED"/>
    <property type="match status" value="1"/>
</dbReference>
<dbReference type="PANTHER" id="PTHR43268">
    <property type="entry name" value="THIOSULFATE SULFURTRANSFERASE/RHODANESE-LIKE DOMAIN-CONTAINING PROTEIN 2"/>
    <property type="match status" value="1"/>
</dbReference>
<dbReference type="Pfam" id="PF00581">
    <property type="entry name" value="Rhodanese"/>
    <property type="match status" value="1"/>
</dbReference>
<dbReference type="Pfam" id="PF17773">
    <property type="entry name" value="UPF0176_N"/>
    <property type="match status" value="1"/>
</dbReference>
<dbReference type="SMART" id="SM00450">
    <property type="entry name" value="RHOD"/>
    <property type="match status" value="1"/>
</dbReference>
<dbReference type="SUPFAM" id="SSF52821">
    <property type="entry name" value="Rhodanese/Cell cycle control phosphatase"/>
    <property type="match status" value="1"/>
</dbReference>
<dbReference type="PROSITE" id="PS50206">
    <property type="entry name" value="RHODANESE_3"/>
    <property type="match status" value="1"/>
</dbReference>
<protein>
    <recommendedName>
        <fullName evidence="1">tRNA uridine(34) hydroxylase</fullName>
        <ecNumber evidence="1">1.14.-.-</ecNumber>
    </recommendedName>
    <alternativeName>
        <fullName evidence="1">tRNA hydroxylation protein O</fullName>
    </alternativeName>
</protein>
<name>TRHO_XANE5</name>
<gene>
    <name evidence="1" type="primary">trhO</name>
    <name type="ordered locus">XCV2421</name>
</gene>